<evidence type="ECO:0000255" key="1">
    <source>
        <dbReference type="HAMAP-Rule" id="MF_00022"/>
    </source>
</evidence>
<accession>B0U106</accession>
<feature type="chain" id="PRO_1000074321" description="Glutamate--tRNA ligase">
    <location>
        <begin position="1"/>
        <end position="469"/>
    </location>
</feature>
<feature type="short sequence motif" description="'HIGH' region" evidence="1">
    <location>
        <begin position="8"/>
        <end position="18"/>
    </location>
</feature>
<feature type="short sequence motif" description="'KMSKS' region" evidence="1">
    <location>
        <begin position="236"/>
        <end position="240"/>
    </location>
</feature>
<feature type="binding site" evidence="1">
    <location>
        <position position="97"/>
    </location>
    <ligand>
        <name>Zn(2+)</name>
        <dbReference type="ChEBI" id="CHEBI:29105"/>
    </ligand>
</feature>
<feature type="binding site" evidence="1">
    <location>
        <position position="99"/>
    </location>
    <ligand>
        <name>Zn(2+)</name>
        <dbReference type="ChEBI" id="CHEBI:29105"/>
    </ligand>
</feature>
<feature type="binding site" evidence="1">
    <location>
        <position position="124"/>
    </location>
    <ligand>
        <name>Zn(2+)</name>
        <dbReference type="ChEBI" id="CHEBI:29105"/>
    </ligand>
</feature>
<feature type="binding site" evidence="1">
    <location>
        <position position="126"/>
    </location>
    <ligand>
        <name>Zn(2+)</name>
        <dbReference type="ChEBI" id="CHEBI:29105"/>
    </ligand>
</feature>
<feature type="binding site" evidence="1">
    <location>
        <position position="239"/>
    </location>
    <ligand>
        <name>ATP</name>
        <dbReference type="ChEBI" id="CHEBI:30616"/>
    </ligand>
</feature>
<proteinExistence type="inferred from homology"/>
<gene>
    <name evidence="1" type="primary">gltX</name>
    <name type="ordered locus">Fphi_0603</name>
</gene>
<dbReference type="EC" id="6.1.1.17" evidence="1"/>
<dbReference type="EMBL" id="CP000937">
    <property type="protein sequence ID" value="ABZ86822.1"/>
    <property type="molecule type" value="Genomic_DNA"/>
</dbReference>
<dbReference type="SMR" id="B0U106"/>
<dbReference type="KEGG" id="fph:Fphi_0603"/>
<dbReference type="eggNOG" id="COG0008">
    <property type="taxonomic scope" value="Bacteria"/>
</dbReference>
<dbReference type="HOGENOM" id="CLU_015768_6_0_6"/>
<dbReference type="GO" id="GO:0005829">
    <property type="term" value="C:cytosol"/>
    <property type="evidence" value="ECO:0007669"/>
    <property type="project" value="TreeGrafter"/>
</dbReference>
<dbReference type="GO" id="GO:0005524">
    <property type="term" value="F:ATP binding"/>
    <property type="evidence" value="ECO:0007669"/>
    <property type="project" value="UniProtKB-UniRule"/>
</dbReference>
<dbReference type="GO" id="GO:0004818">
    <property type="term" value="F:glutamate-tRNA ligase activity"/>
    <property type="evidence" value="ECO:0007669"/>
    <property type="project" value="UniProtKB-UniRule"/>
</dbReference>
<dbReference type="GO" id="GO:0000049">
    <property type="term" value="F:tRNA binding"/>
    <property type="evidence" value="ECO:0007669"/>
    <property type="project" value="InterPro"/>
</dbReference>
<dbReference type="GO" id="GO:0008270">
    <property type="term" value="F:zinc ion binding"/>
    <property type="evidence" value="ECO:0007669"/>
    <property type="project" value="UniProtKB-UniRule"/>
</dbReference>
<dbReference type="GO" id="GO:0006424">
    <property type="term" value="P:glutamyl-tRNA aminoacylation"/>
    <property type="evidence" value="ECO:0007669"/>
    <property type="project" value="UniProtKB-UniRule"/>
</dbReference>
<dbReference type="CDD" id="cd00808">
    <property type="entry name" value="GluRS_core"/>
    <property type="match status" value="1"/>
</dbReference>
<dbReference type="FunFam" id="3.40.50.620:FF:000007">
    <property type="entry name" value="Glutamate--tRNA ligase"/>
    <property type="match status" value="1"/>
</dbReference>
<dbReference type="Gene3D" id="1.10.10.350">
    <property type="match status" value="1"/>
</dbReference>
<dbReference type="Gene3D" id="3.40.50.620">
    <property type="entry name" value="HUPs"/>
    <property type="match status" value="1"/>
</dbReference>
<dbReference type="HAMAP" id="MF_00022">
    <property type="entry name" value="Glu_tRNA_synth_type1"/>
    <property type="match status" value="1"/>
</dbReference>
<dbReference type="InterPro" id="IPR045462">
    <property type="entry name" value="aa-tRNA-synth_I_cd-bd"/>
</dbReference>
<dbReference type="InterPro" id="IPR020751">
    <property type="entry name" value="aa-tRNA-synth_I_codon-bd_sub2"/>
</dbReference>
<dbReference type="InterPro" id="IPR001412">
    <property type="entry name" value="aa-tRNA-synth_I_CS"/>
</dbReference>
<dbReference type="InterPro" id="IPR008925">
    <property type="entry name" value="aa_tRNA-synth_I_cd-bd_sf"/>
</dbReference>
<dbReference type="InterPro" id="IPR004527">
    <property type="entry name" value="Glu-tRNA-ligase_bac/mito"/>
</dbReference>
<dbReference type="InterPro" id="IPR000924">
    <property type="entry name" value="Glu/Gln-tRNA-synth"/>
</dbReference>
<dbReference type="InterPro" id="IPR020058">
    <property type="entry name" value="Glu/Gln-tRNA-synth_Ib_cat-dom"/>
</dbReference>
<dbReference type="InterPro" id="IPR049940">
    <property type="entry name" value="GluQ/Sye"/>
</dbReference>
<dbReference type="InterPro" id="IPR033910">
    <property type="entry name" value="GluRS_core"/>
</dbReference>
<dbReference type="InterPro" id="IPR014729">
    <property type="entry name" value="Rossmann-like_a/b/a_fold"/>
</dbReference>
<dbReference type="NCBIfam" id="TIGR00464">
    <property type="entry name" value="gltX_bact"/>
    <property type="match status" value="1"/>
</dbReference>
<dbReference type="PANTHER" id="PTHR43311">
    <property type="entry name" value="GLUTAMATE--TRNA LIGASE"/>
    <property type="match status" value="1"/>
</dbReference>
<dbReference type="PANTHER" id="PTHR43311:SF2">
    <property type="entry name" value="GLUTAMATE--TRNA LIGASE, MITOCHONDRIAL-RELATED"/>
    <property type="match status" value="1"/>
</dbReference>
<dbReference type="Pfam" id="PF19269">
    <property type="entry name" value="Anticodon_2"/>
    <property type="match status" value="1"/>
</dbReference>
<dbReference type="Pfam" id="PF00749">
    <property type="entry name" value="tRNA-synt_1c"/>
    <property type="match status" value="1"/>
</dbReference>
<dbReference type="PRINTS" id="PR00987">
    <property type="entry name" value="TRNASYNTHGLU"/>
</dbReference>
<dbReference type="SUPFAM" id="SSF48163">
    <property type="entry name" value="An anticodon-binding domain of class I aminoacyl-tRNA synthetases"/>
    <property type="match status" value="1"/>
</dbReference>
<dbReference type="SUPFAM" id="SSF52374">
    <property type="entry name" value="Nucleotidylyl transferase"/>
    <property type="match status" value="1"/>
</dbReference>
<dbReference type="PROSITE" id="PS00178">
    <property type="entry name" value="AA_TRNA_LIGASE_I"/>
    <property type="match status" value="1"/>
</dbReference>
<protein>
    <recommendedName>
        <fullName evidence="1">Glutamate--tRNA ligase</fullName>
        <ecNumber evidence="1">6.1.1.17</ecNumber>
    </recommendedName>
    <alternativeName>
        <fullName evidence="1">Glutamyl-tRNA synthetase</fullName>
        <shortName evidence="1">GluRS</shortName>
    </alternativeName>
</protein>
<reference key="1">
    <citation type="submission" date="2007-12" db="EMBL/GenBank/DDBJ databases">
        <title>Complete sequence of chromosome of Francisella philomiragia subsp. philomiragia ATCC 25017.</title>
        <authorList>
            <consortium name="US DOE Joint Genome Institute"/>
            <person name="Copeland A."/>
            <person name="Lucas S."/>
            <person name="Lapidus A."/>
            <person name="Barry K."/>
            <person name="Detter J.C."/>
            <person name="Glavina del Rio T."/>
            <person name="Hammon N."/>
            <person name="Israni S."/>
            <person name="Dalin E."/>
            <person name="Tice H."/>
            <person name="Pitluck S."/>
            <person name="Chain P."/>
            <person name="Malfatti S."/>
            <person name="Shin M."/>
            <person name="Vergez L."/>
            <person name="Schmutz J."/>
            <person name="Larimer F."/>
            <person name="Land M."/>
            <person name="Hauser L."/>
            <person name="Richardson P."/>
        </authorList>
    </citation>
    <scope>NUCLEOTIDE SEQUENCE [LARGE SCALE GENOMIC DNA]</scope>
    <source>
        <strain>ATCC 25017 / CCUG 19701 / FSC 153 / O#319-036</strain>
    </source>
</reference>
<organism>
    <name type="scientific">Francisella philomiragia subsp. philomiragia (strain ATCC 25017 / CCUG 19701 / FSC 153 / O#319-036)</name>
    <dbReference type="NCBI Taxonomy" id="484022"/>
    <lineage>
        <taxon>Bacteria</taxon>
        <taxon>Pseudomonadati</taxon>
        <taxon>Pseudomonadota</taxon>
        <taxon>Gammaproteobacteria</taxon>
        <taxon>Thiotrichales</taxon>
        <taxon>Francisellaceae</taxon>
        <taxon>Francisella</taxon>
    </lineage>
</organism>
<sequence>MITTRFAPSPTGFLHVGGVRTALFSWLYARHNNGKFLLRIEDTDLERSTQAAVDAILDGMSWLGLKNDEEIYYQTKRFDRYHEVIKQLIAEGKAYYCNCSKERLDELREHQQANNLKTGYDGKCRDASYIPQEGDSFVVRFKNPQDGLVSWDDAVKGRISISNHELDDMIIQRTDGSPTYNFCVVVDDIDMAITHIIRGDDHVNNTPKQINIYKALNAHVPVFAHVPMILGPDGAKLSKRHGAVNVMQYREDGYLPQAILNYLVRLGWSHGDQEIFSIDEMIKSFNLEHINASPSRFDFDKLKWLNKHYIKESKFEDIRTEVEYHFAKFGLDIANGPDLQDLVAVMAEKVDTLVELTEKSSYFYSDDIVYDEKAVKKHVKTTTGEIFIKLLENFEALETQQWQDPDTLHNVVASTAEQCEVGMGKVGMPLRIAITGSGQSPDIGITLKLLGKEKVLSRLQRAIKELCNS</sequence>
<comment type="function">
    <text evidence="1">Catalyzes the attachment of glutamate to tRNA(Glu) in a two-step reaction: glutamate is first activated by ATP to form Glu-AMP and then transferred to the acceptor end of tRNA(Glu).</text>
</comment>
<comment type="catalytic activity">
    <reaction evidence="1">
        <text>tRNA(Glu) + L-glutamate + ATP = L-glutamyl-tRNA(Glu) + AMP + diphosphate</text>
        <dbReference type="Rhea" id="RHEA:23540"/>
        <dbReference type="Rhea" id="RHEA-COMP:9663"/>
        <dbReference type="Rhea" id="RHEA-COMP:9680"/>
        <dbReference type="ChEBI" id="CHEBI:29985"/>
        <dbReference type="ChEBI" id="CHEBI:30616"/>
        <dbReference type="ChEBI" id="CHEBI:33019"/>
        <dbReference type="ChEBI" id="CHEBI:78442"/>
        <dbReference type="ChEBI" id="CHEBI:78520"/>
        <dbReference type="ChEBI" id="CHEBI:456215"/>
        <dbReference type="EC" id="6.1.1.17"/>
    </reaction>
</comment>
<comment type="cofactor">
    <cofactor evidence="1">
        <name>Zn(2+)</name>
        <dbReference type="ChEBI" id="CHEBI:29105"/>
    </cofactor>
    <text evidence="1">Binds 1 zinc ion per subunit.</text>
</comment>
<comment type="subunit">
    <text evidence="1">Monomer.</text>
</comment>
<comment type="subcellular location">
    <subcellularLocation>
        <location evidence="1">Cytoplasm</location>
    </subcellularLocation>
</comment>
<comment type="similarity">
    <text evidence="1">Belongs to the class-I aminoacyl-tRNA synthetase family. Glutamate--tRNA ligase type 1 subfamily.</text>
</comment>
<keyword id="KW-0030">Aminoacyl-tRNA synthetase</keyword>
<keyword id="KW-0067">ATP-binding</keyword>
<keyword id="KW-0963">Cytoplasm</keyword>
<keyword id="KW-0436">Ligase</keyword>
<keyword id="KW-0479">Metal-binding</keyword>
<keyword id="KW-0547">Nucleotide-binding</keyword>
<keyword id="KW-0648">Protein biosynthesis</keyword>
<keyword id="KW-0862">Zinc</keyword>
<name>SYE_FRAP2</name>